<dbReference type="EC" id="7.1.1.9"/>
<dbReference type="EMBL" id="AY484747">
    <property type="protein sequence ID" value="AAT98406.1"/>
    <property type="molecule type" value="Genomic_DNA"/>
</dbReference>
<dbReference type="PIR" id="S28747">
    <property type="entry name" value="S28747"/>
</dbReference>
<dbReference type="RefSeq" id="YP_073337.1">
    <property type="nucleotide sequence ID" value="NC_006161.1"/>
</dbReference>
<dbReference type="GO" id="GO:0005743">
    <property type="term" value="C:mitochondrial inner membrane"/>
    <property type="evidence" value="ECO:0007669"/>
    <property type="project" value="UniProtKB-SubCell"/>
</dbReference>
<dbReference type="GO" id="GO:0005507">
    <property type="term" value="F:copper ion binding"/>
    <property type="evidence" value="ECO:0007669"/>
    <property type="project" value="InterPro"/>
</dbReference>
<dbReference type="GO" id="GO:0004129">
    <property type="term" value="F:cytochrome-c oxidase activity"/>
    <property type="evidence" value="ECO:0007669"/>
    <property type="project" value="UniProtKB-EC"/>
</dbReference>
<dbReference type="GO" id="GO:0042773">
    <property type="term" value="P:ATP synthesis coupled electron transport"/>
    <property type="evidence" value="ECO:0007669"/>
    <property type="project" value="TreeGrafter"/>
</dbReference>
<dbReference type="CDD" id="cd13912">
    <property type="entry name" value="CcO_II_C"/>
    <property type="match status" value="1"/>
</dbReference>
<dbReference type="Gene3D" id="1.10.287.90">
    <property type="match status" value="1"/>
</dbReference>
<dbReference type="Gene3D" id="2.60.40.420">
    <property type="entry name" value="Cupredoxins - blue copper proteins"/>
    <property type="match status" value="1"/>
</dbReference>
<dbReference type="InterPro" id="IPR045187">
    <property type="entry name" value="CcO_II"/>
</dbReference>
<dbReference type="InterPro" id="IPR002429">
    <property type="entry name" value="CcO_II-like_C"/>
</dbReference>
<dbReference type="InterPro" id="IPR034210">
    <property type="entry name" value="CcO_II_C"/>
</dbReference>
<dbReference type="InterPro" id="IPR001505">
    <property type="entry name" value="Copper_CuA"/>
</dbReference>
<dbReference type="InterPro" id="IPR008972">
    <property type="entry name" value="Cupredoxin"/>
</dbReference>
<dbReference type="InterPro" id="IPR011759">
    <property type="entry name" value="Cyt_c_oxidase_su2_TM_dom"/>
</dbReference>
<dbReference type="InterPro" id="IPR036257">
    <property type="entry name" value="Cyt_c_oxidase_su2_TM_sf"/>
</dbReference>
<dbReference type="PANTHER" id="PTHR22888:SF9">
    <property type="entry name" value="CYTOCHROME C OXIDASE SUBUNIT 2"/>
    <property type="match status" value="1"/>
</dbReference>
<dbReference type="PANTHER" id="PTHR22888">
    <property type="entry name" value="CYTOCHROME C OXIDASE, SUBUNIT II"/>
    <property type="match status" value="1"/>
</dbReference>
<dbReference type="Pfam" id="PF00116">
    <property type="entry name" value="COX2"/>
    <property type="match status" value="1"/>
</dbReference>
<dbReference type="Pfam" id="PF02790">
    <property type="entry name" value="COX2_TM"/>
    <property type="match status" value="1"/>
</dbReference>
<dbReference type="PRINTS" id="PR01166">
    <property type="entry name" value="CYCOXIDASEII"/>
</dbReference>
<dbReference type="SUPFAM" id="SSF49503">
    <property type="entry name" value="Cupredoxins"/>
    <property type="match status" value="1"/>
</dbReference>
<dbReference type="SUPFAM" id="SSF81464">
    <property type="entry name" value="Cytochrome c oxidase subunit II-like, transmembrane region"/>
    <property type="match status" value="1"/>
</dbReference>
<dbReference type="PROSITE" id="PS00078">
    <property type="entry name" value="COX2"/>
    <property type="match status" value="1"/>
</dbReference>
<dbReference type="PROSITE" id="PS50857">
    <property type="entry name" value="COX2_CUA"/>
    <property type="match status" value="1"/>
</dbReference>
<dbReference type="PROSITE" id="PS50999">
    <property type="entry name" value="COX2_TM"/>
    <property type="match status" value="1"/>
</dbReference>
<gene>
    <name type="primary">COII</name>
</gene>
<proteinExistence type="inferred from homology"/>
<organism>
    <name type="scientific">Mytilus edulis</name>
    <name type="common">Blue mussel</name>
    <dbReference type="NCBI Taxonomy" id="6550"/>
    <lineage>
        <taxon>Eukaryota</taxon>
        <taxon>Metazoa</taxon>
        <taxon>Spiralia</taxon>
        <taxon>Lophotrochozoa</taxon>
        <taxon>Mollusca</taxon>
        <taxon>Bivalvia</taxon>
        <taxon>Autobranchia</taxon>
        <taxon>Pteriomorphia</taxon>
        <taxon>Mytilida</taxon>
        <taxon>Mytiloidea</taxon>
        <taxon>Mytilidae</taxon>
        <taxon>Mytilinae</taxon>
        <taxon>Mytilus</taxon>
    </lineage>
</organism>
<geneLocation type="mitochondrion"/>
<protein>
    <recommendedName>
        <fullName>Cytochrome c oxidase subunit 2</fullName>
        <ecNumber>7.1.1.9</ecNumber>
    </recommendedName>
    <alternativeName>
        <fullName>Cytochrome c oxidase polypeptide II</fullName>
    </alternativeName>
</protein>
<evidence type="ECO:0000250" key="1">
    <source>
        <dbReference type="UniProtKB" id="P00410"/>
    </source>
</evidence>
<evidence type="ECO:0000255" key="2"/>
<evidence type="ECO:0000305" key="3"/>
<sequence length="242" mass="28273">MSFYGSRYFGDIVHGELGKDLFRYHGFVMMVAVAVLVFVMYMGCVILFTKFSYRHFLNRQRLEFWWTIVPMLMLVGLWXPSMINLYYMEEVKRPRWNFKAIGKQWYWSYEFCRNLDTPSSSESAESISCYTIDSYMEDQQETFSKGGYRLLDVDNRMVAPADVQMTAFVSSSDVLHSFALPKLLIKVDAIPGRINRLPMKASQCSIIYGQCSEICGVNHSFMPIVIEFIPEKYFVMWLEALN</sequence>
<name>COX2_MYTED</name>
<accession>Q00227</accession>
<accession>Q68SR6</accession>
<feature type="chain" id="PRO_0000183636" description="Cytochrome c oxidase subunit 2">
    <location>
        <begin position="1"/>
        <end position="242"/>
    </location>
</feature>
<feature type="topological domain" description="Mitochondrial intermembrane" evidence="2">
    <location>
        <begin position="1"/>
        <end position="30"/>
    </location>
</feature>
<feature type="transmembrane region" description="Helical" evidence="2">
    <location>
        <begin position="31"/>
        <end position="47"/>
    </location>
</feature>
<feature type="topological domain" description="Mitochondrial matrix" evidence="2">
    <location>
        <begin position="48"/>
        <end position="66"/>
    </location>
</feature>
<feature type="transmembrane region" description="Helical" evidence="2">
    <location>
        <begin position="67"/>
        <end position="83"/>
    </location>
</feature>
<feature type="topological domain" description="Mitochondrial intermembrane" evidence="2">
    <location>
        <begin position="84"/>
        <end position="242"/>
    </location>
</feature>
<feature type="binding site" evidence="1">
    <location>
        <position position="176"/>
    </location>
    <ligand>
        <name>Cu cation</name>
        <dbReference type="ChEBI" id="CHEBI:23378"/>
        <label>A1</label>
    </ligand>
</feature>
<feature type="binding site" evidence="1">
    <location>
        <position position="211"/>
    </location>
    <ligand>
        <name>Cu cation</name>
        <dbReference type="ChEBI" id="CHEBI:23378"/>
        <label>A1</label>
    </ligand>
</feature>
<feature type="binding site" evidence="1">
    <location>
        <position position="211"/>
    </location>
    <ligand>
        <name>Cu cation</name>
        <dbReference type="ChEBI" id="CHEBI:23378"/>
        <label>A2</label>
    </ligand>
</feature>
<feature type="binding site" evidence="1">
    <location>
        <position position="213"/>
    </location>
    <ligand>
        <name>Cu cation</name>
        <dbReference type="ChEBI" id="CHEBI:23378"/>
        <label>A2</label>
    </ligand>
</feature>
<feature type="binding site" evidence="1">
    <location>
        <position position="213"/>
    </location>
    <ligand>
        <name>Mg(2+)</name>
        <dbReference type="ChEBI" id="CHEBI:18420"/>
        <note>ligand shared with subunit 1</note>
    </ligand>
</feature>
<feature type="binding site" evidence="1">
    <location>
        <position position="215"/>
    </location>
    <ligand>
        <name>Cu cation</name>
        <dbReference type="ChEBI" id="CHEBI:23378"/>
        <label>A1</label>
    </ligand>
</feature>
<feature type="binding site" evidence="1">
    <location>
        <position position="215"/>
    </location>
    <ligand>
        <name>Cu cation</name>
        <dbReference type="ChEBI" id="CHEBI:23378"/>
        <label>A2</label>
    </ligand>
</feature>
<feature type="binding site" evidence="1">
    <location>
        <position position="219"/>
    </location>
    <ligand>
        <name>Cu cation</name>
        <dbReference type="ChEBI" id="CHEBI:23378"/>
        <label>A2</label>
    </ligand>
</feature>
<feature type="binding site" evidence="1">
    <location>
        <position position="222"/>
    </location>
    <ligand>
        <name>Cu cation</name>
        <dbReference type="ChEBI" id="CHEBI:23378"/>
        <label>A1</label>
    </ligand>
</feature>
<reference key="1">
    <citation type="journal article" date="2004" name="Mol. Biol. Evol.">
        <title>Complete sequences of the highly rearranged molluscan mitochondrial genomes of the scaphopod Graptacme eborea and the bivalve Mytilus edulis.</title>
        <authorList>
            <person name="Boore J.L."/>
            <person name="Medina M."/>
            <person name="Rosenberg L.A."/>
        </authorList>
    </citation>
    <scope>NUCLEOTIDE SEQUENCE [GENOMIC DNA]</scope>
</reference>
<reference key="2">
    <citation type="journal article" date="1992" name="Genetics">
        <title>A novel mitochondrial genome organization for the blue mussel, Mytilus edulis.</title>
        <authorList>
            <person name="Hoffmann R.J."/>
            <person name="Boore J.L."/>
            <person name="Brown W.M."/>
        </authorList>
    </citation>
    <scope>NUCLEOTIDE SEQUENCE [GENOMIC DNA] OF 1-112 AND 162-242</scope>
</reference>
<keyword id="KW-0186">Copper</keyword>
<keyword id="KW-0249">Electron transport</keyword>
<keyword id="KW-0460">Magnesium</keyword>
<keyword id="KW-0472">Membrane</keyword>
<keyword id="KW-0479">Metal-binding</keyword>
<keyword id="KW-0496">Mitochondrion</keyword>
<keyword id="KW-0999">Mitochondrion inner membrane</keyword>
<keyword id="KW-0679">Respiratory chain</keyword>
<keyword id="KW-1278">Translocase</keyword>
<keyword id="KW-0812">Transmembrane</keyword>
<keyword id="KW-1133">Transmembrane helix</keyword>
<keyword id="KW-0813">Transport</keyword>
<comment type="function">
    <text evidence="1">Component of the cytochrome c oxidase, the last enzyme in the mitochondrial electron transport chain which drives oxidative phosphorylation. The respiratory chain contains 3 multisubunit complexes succinate dehydrogenase (complex II, CII), ubiquinol-cytochrome c oxidoreductase (cytochrome b-c1 complex, complex III, CIII) and cytochrome c oxidase (complex IV, CIV), that cooperate to transfer electrons derived from NADH and succinate to molecular oxygen, creating an electrochemical gradient over the inner membrane that drives transmembrane transport and the ATP synthase. Cytochrome c oxidase is the component of the respiratory chain that catalyzes the reduction of oxygen to water. Electrons originating from reduced cytochrome c in the intermembrane space (IMS) are transferred via the dinuclear copper A center (CU(A)) of subunit 2 and heme A of subunit 1 to the active site in subunit 1, a binuclear center (BNC) formed by heme A3 and copper B (CU(B)). The BNC reduces molecular oxygen to 2 water molecules using 4 electrons from cytochrome c in the IMS and 4 protons from the mitochondrial matrix.</text>
</comment>
<comment type="catalytic activity">
    <reaction evidence="1">
        <text>4 Fe(II)-[cytochrome c] + O2 + 8 H(+)(in) = 4 Fe(III)-[cytochrome c] + 2 H2O + 4 H(+)(out)</text>
        <dbReference type="Rhea" id="RHEA:11436"/>
        <dbReference type="Rhea" id="RHEA-COMP:10350"/>
        <dbReference type="Rhea" id="RHEA-COMP:14399"/>
        <dbReference type="ChEBI" id="CHEBI:15377"/>
        <dbReference type="ChEBI" id="CHEBI:15378"/>
        <dbReference type="ChEBI" id="CHEBI:15379"/>
        <dbReference type="ChEBI" id="CHEBI:29033"/>
        <dbReference type="ChEBI" id="CHEBI:29034"/>
        <dbReference type="EC" id="7.1.1.9"/>
    </reaction>
    <physiologicalReaction direction="left-to-right" evidence="1">
        <dbReference type="Rhea" id="RHEA:11437"/>
    </physiologicalReaction>
</comment>
<comment type="cofactor">
    <cofactor evidence="1">
        <name>Cu cation</name>
        <dbReference type="ChEBI" id="CHEBI:23378"/>
    </cofactor>
    <text evidence="1">Binds a dinuclear copper A center per subunit.</text>
</comment>
<comment type="subunit">
    <text evidence="1">Component of the cytochrome c oxidase (complex IV, CIV), a multisubunit enzyme composed of a catalytic core of 3 subunits and several supernumerary subunits. The complex exists as a monomer or a dimer and forms supercomplexes (SCs) in the inner mitochondrial membrane with ubiquinol-cytochrome c oxidoreductase (cytochrome b-c1 complex, complex III, CIII).</text>
</comment>
<comment type="subcellular location">
    <subcellularLocation>
        <location evidence="1">Mitochondrion inner membrane</location>
        <topology evidence="1">Multi-pass membrane protein</topology>
    </subcellularLocation>
</comment>
<comment type="similarity">
    <text evidence="3">Belongs to the cytochrome c oxidase subunit 2 family.</text>
</comment>